<keyword id="KW-0238">DNA-binding</keyword>
<keyword id="KW-0371">Homeobox</keyword>
<keyword id="KW-0539">Nucleus</keyword>
<keyword id="KW-1185">Reference proteome</keyword>
<keyword id="KW-0804">Transcription</keyword>
<keyword id="KW-0805">Transcription regulation</keyword>
<accession>P63156</accession>
<accession>Q9JK26</accession>
<protein>
    <recommendedName>
        <fullName>BarH-like 1 homeobox protein</fullName>
    </recommendedName>
    <alternativeName>
        <fullName>Bar-class homeodomain protein MBH2</fullName>
    </alternativeName>
    <alternativeName>
        <fullName>BarH-related homeobox protein 1</fullName>
    </alternativeName>
</protein>
<proteinExistence type="evidence at transcript level"/>
<comment type="subcellular location">
    <subcellularLocation>
        <location evidence="3">Nucleus</location>
    </subcellularLocation>
</comment>
<comment type="similarity">
    <text evidence="3">Belongs to the BAR homeobox family.</text>
</comment>
<sequence>MEGSNGFGIDSILSHRAGSPALPKGDPLLGDCRSPLELSPRSESSSDCSSPASPGRDCLETSTSRPGAASGPGLDSHLQPGQLSAPAQSRTVTSSFLIRDILADCKPLAACAPYSSSGQPAAPEPGGRLAAKAGEDFRDKLDKSVSSASSDSEYKVKEEGDREISSSRDSPPVRLKKPRKARTAFTDHQLAQLERSFERQKYLSVQDRMELAASLNLTDTQVKTWYQNRRTKWKRQTAVGLELLAEAGNYSALQRMFPSPYFYPQSLVSNLDPGAALYLYRGPSAPPPALQRPLVPRILIHGLQGASEPPPPLPPLPGVLPRAAQPR</sequence>
<organism>
    <name type="scientific">Rattus norvegicus</name>
    <name type="common">Rat</name>
    <dbReference type="NCBI Taxonomy" id="10116"/>
    <lineage>
        <taxon>Eukaryota</taxon>
        <taxon>Metazoa</taxon>
        <taxon>Chordata</taxon>
        <taxon>Craniata</taxon>
        <taxon>Vertebrata</taxon>
        <taxon>Euteleostomi</taxon>
        <taxon>Mammalia</taxon>
        <taxon>Eutheria</taxon>
        <taxon>Euarchontoglires</taxon>
        <taxon>Glires</taxon>
        <taxon>Rodentia</taxon>
        <taxon>Myomorpha</taxon>
        <taxon>Muroidea</taxon>
        <taxon>Muridae</taxon>
        <taxon>Murinae</taxon>
        <taxon>Rattus</taxon>
    </lineage>
</organism>
<dbReference type="EMBL" id="AB043981">
    <property type="protein sequence ID" value="BAB18600.1"/>
    <property type="molecule type" value="mRNA"/>
</dbReference>
<dbReference type="RefSeq" id="NP_476450.1">
    <property type="nucleotide sequence ID" value="NM_057109.2"/>
</dbReference>
<dbReference type="SMR" id="P63156"/>
<dbReference type="FunCoup" id="P63156">
    <property type="interactions" value="202"/>
</dbReference>
<dbReference type="STRING" id="10116.ENSRNOP00000017725"/>
<dbReference type="PhosphoSitePlus" id="P63156"/>
<dbReference type="PaxDb" id="10116-ENSRNOP00000017725"/>
<dbReference type="Ensembl" id="ENSRNOT00000017725.4">
    <property type="protein sequence ID" value="ENSRNOP00000017725.1"/>
    <property type="gene ID" value="ENSRNOG00000013209.4"/>
</dbReference>
<dbReference type="GeneID" id="117232"/>
<dbReference type="KEGG" id="rno:117232"/>
<dbReference type="UCSC" id="RGD:620648">
    <property type="organism name" value="rat"/>
</dbReference>
<dbReference type="AGR" id="RGD:620648"/>
<dbReference type="CTD" id="56751"/>
<dbReference type="RGD" id="620648">
    <property type="gene designation" value="Barhl1"/>
</dbReference>
<dbReference type="eggNOG" id="KOG0488">
    <property type="taxonomic scope" value="Eukaryota"/>
</dbReference>
<dbReference type="GeneTree" id="ENSGT00940000160428"/>
<dbReference type="HOGENOM" id="CLU_074592_0_0_1"/>
<dbReference type="InParanoid" id="P63156"/>
<dbReference type="OMA" id="LIGDCRS"/>
<dbReference type="OrthoDB" id="6159439at2759"/>
<dbReference type="PhylomeDB" id="P63156"/>
<dbReference type="TreeFam" id="TF316128"/>
<dbReference type="PRO" id="PR:P63156"/>
<dbReference type="Proteomes" id="UP000002494">
    <property type="component" value="Chromosome 3"/>
</dbReference>
<dbReference type="Bgee" id="ENSRNOG00000013209">
    <property type="expression patterns" value="Expressed in cerebellum"/>
</dbReference>
<dbReference type="GO" id="GO:0005634">
    <property type="term" value="C:nucleus"/>
    <property type="evidence" value="ECO:0000266"/>
    <property type="project" value="RGD"/>
</dbReference>
<dbReference type="GO" id="GO:0001228">
    <property type="term" value="F:DNA-binding transcription activator activity, RNA polymerase II-specific"/>
    <property type="evidence" value="ECO:0000266"/>
    <property type="project" value="RGD"/>
</dbReference>
<dbReference type="GO" id="GO:0000981">
    <property type="term" value="F:DNA-binding transcription factor activity, RNA polymerase II-specific"/>
    <property type="evidence" value="ECO:0000318"/>
    <property type="project" value="GO_Central"/>
</dbReference>
<dbReference type="GO" id="GO:0000977">
    <property type="term" value="F:RNA polymerase II transcription regulatory region sequence-specific DNA binding"/>
    <property type="evidence" value="ECO:0000318"/>
    <property type="project" value="GO_Central"/>
</dbReference>
<dbReference type="GO" id="GO:1990837">
    <property type="term" value="F:sequence-specific double-stranded DNA binding"/>
    <property type="evidence" value="ECO:0000266"/>
    <property type="project" value="RGD"/>
</dbReference>
<dbReference type="GO" id="GO:0030901">
    <property type="term" value="P:midbrain development"/>
    <property type="evidence" value="ECO:0000266"/>
    <property type="project" value="RGD"/>
</dbReference>
<dbReference type="GO" id="GO:0043524">
    <property type="term" value="P:negative regulation of neuron apoptotic process"/>
    <property type="evidence" value="ECO:0000266"/>
    <property type="project" value="RGD"/>
</dbReference>
<dbReference type="GO" id="GO:1905586">
    <property type="term" value="P:negative regulation of outer hair cell apoptotic process"/>
    <property type="evidence" value="ECO:0000266"/>
    <property type="project" value="RGD"/>
</dbReference>
<dbReference type="GO" id="GO:0051402">
    <property type="term" value="P:neuron apoptotic process"/>
    <property type="evidence" value="ECO:0000266"/>
    <property type="project" value="RGD"/>
</dbReference>
<dbReference type="GO" id="GO:0001764">
    <property type="term" value="P:neuron migration"/>
    <property type="evidence" value="ECO:0000266"/>
    <property type="project" value="RGD"/>
</dbReference>
<dbReference type="GO" id="GO:1905584">
    <property type="term" value="P:outer hair cell apoptotic process"/>
    <property type="evidence" value="ECO:0000266"/>
    <property type="project" value="RGD"/>
</dbReference>
<dbReference type="GO" id="GO:0045944">
    <property type="term" value="P:positive regulation of transcription by RNA polymerase II"/>
    <property type="evidence" value="ECO:0000266"/>
    <property type="project" value="RGD"/>
</dbReference>
<dbReference type="GO" id="GO:0006357">
    <property type="term" value="P:regulation of transcription by RNA polymerase II"/>
    <property type="evidence" value="ECO:0000318"/>
    <property type="project" value="GO_Central"/>
</dbReference>
<dbReference type="GO" id="GO:0007605">
    <property type="term" value="P:sensory perception of sound"/>
    <property type="evidence" value="ECO:0000266"/>
    <property type="project" value="RGD"/>
</dbReference>
<dbReference type="CDD" id="cd00086">
    <property type="entry name" value="homeodomain"/>
    <property type="match status" value="1"/>
</dbReference>
<dbReference type="FunFam" id="1.10.10.60:FF:000097">
    <property type="entry name" value="barH-like 2 homeobox protein-like"/>
    <property type="match status" value="1"/>
</dbReference>
<dbReference type="Gene3D" id="1.10.10.60">
    <property type="entry name" value="Homeodomain-like"/>
    <property type="match status" value="1"/>
</dbReference>
<dbReference type="InterPro" id="IPR001356">
    <property type="entry name" value="HD"/>
</dbReference>
<dbReference type="InterPro" id="IPR020479">
    <property type="entry name" value="HD_metazoa"/>
</dbReference>
<dbReference type="InterPro" id="IPR017970">
    <property type="entry name" value="Homeobox_CS"/>
</dbReference>
<dbReference type="InterPro" id="IPR050848">
    <property type="entry name" value="Homeobox_TF"/>
</dbReference>
<dbReference type="InterPro" id="IPR009057">
    <property type="entry name" value="Homeodomain-like_sf"/>
</dbReference>
<dbReference type="PANTHER" id="PTHR24333">
    <property type="entry name" value="HOMEO BOX HB9 LIKE A-RELATED"/>
    <property type="match status" value="1"/>
</dbReference>
<dbReference type="PANTHER" id="PTHR24333:SF5">
    <property type="entry name" value="VENT HOMEOBOX"/>
    <property type="match status" value="1"/>
</dbReference>
<dbReference type="Pfam" id="PF00046">
    <property type="entry name" value="Homeodomain"/>
    <property type="match status" value="1"/>
</dbReference>
<dbReference type="PRINTS" id="PR00024">
    <property type="entry name" value="HOMEOBOX"/>
</dbReference>
<dbReference type="SMART" id="SM00389">
    <property type="entry name" value="HOX"/>
    <property type="match status" value="1"/>
</dbReference>
<dbReference type="SUPFAM" id="SSF46689">
    <property type="entry name" value="Homeodomain-like"/>
    <property type="match status" value="1"/>
</dbReference>
<dbReference type="PROSITE" id="PS00027">
    <property type="entry name" value="HOMEOBOX_1"/>
    <property type="match status" value="1"/>
</dbReference>
<dbReference type="PROSITE" id="PS50071">
    <property type="entry name" value="HOMEOBOX_2"/>
    <property type="match status" value="1"/>
</dbReference>
<feature type="chain" id="PRO_0000048828" description="BarH-like 1 homeobox protein">
    <location>
        <begin position="1"/>
        <end position="327"/>
    </location>
</feature>
<feature type="DNA-binding region" description="Homeobox" evidence="1">
    <location>
        <begin position="178"/>
        <end position="237"/>
    </location>
</feature>
<feature type="region of interest" description="Disordered" evidence="2">
    <location>
        <begin position="1"/>
        <end position="90"/>
    </location>
</feature>
<feature type="region of interest" description="Disordered" evidence="2">
    <location>
        <begin position="113"/>
        <end position="181"/>
    </location>
</feature>
<feature type="region of interest" description="Disordered" evidence="2">
    <location>
        <begin position="303"/>
        <end position="327"/>
    </location>
</feature>
<feature type="compositionally biased region" description="Low complexity" evidence="2">
    <location>
        <begin position="33"/>
        <end position="54"/>
    </location>
</feature>
<feature type="compositionally biased region" description="Polar residues" evidence="2">
    <location>
        <begin position="79"/>
        <end position="90"/>
    </location>
</feature>
<feature type="compositionally biased region" description="Basic and acidic residues" evidence="2">
    <location>
        <begin position="133"/>
        <end position="143"/>
    </location>
</feature>
<feature type="compositionally biased region" description="Basic and acidic residues" evidence="2">
    <location>
        <begin position="152"/>
        <end position="166"/>
    </location>
</feature>
<feature type="compositionally biased region" description="Pro residues" evidence="2">
    <location>
        <begin position="308"/>
        <end position="318"/>
    </location>
</feature>
<evidence type="ECO:0000255" key="1">
    <source>
        <dbReference type="PROSITE-ProRule" id="PRU00108"/>
    </source>
</evidence>
<evidence type="ECO:0000256" key="2">
    <source>
        <dbReference type="SAM" id="MobiDB-lite"/>
    </source>
</evidence>
<evidence type="ECO:0000305" key="3"/>
<name>BARH1_RAT</name>
<gene>
    <name type="primary">Barhl1</name>
    <name type="synonym">Mbh2</name>
</gene>
<reference key="1">
    <citation type="submission" date="2000-05" db="EMBL/GenBank/DDBJ databases">
        <title>Identification of a mammalian Bar-class homeobox gene.</title>
        <authorList>
            <person name="Hama T."/>
            <person name="Saba R."/>
            <person name="Nakatsuji N."/>
            <person name="Saito T."/>
        </authorList>
    </citation>
    <scope>NUCLEOTIDE SEQUENCE [MRNA]</scope>
    <source>
        <strain>Sprague-Dawley</strain>
    </source>
</reference>